<feature type="chain" id="PRO_0000439851" description="Norbelladine 4'-O-methyltransferase">
    <location>
        <begin position="1"/>
        <end position="239"/>
    </location>
</feature>
<feature type="binding site" evidence="1">
    <location>
        <position position="55"/>
    </location>
    <ligand>
        <name>S-adenosyl-L-methionine</name>
        <dbReference type="ChEBI" id="CHEBI:59789"/>
    </ligand>
</feature>
<feature type="binding site" evidence="1">
    <location>
        <position position="77"/>
    </location>
    <ligand>
        <name>S-adenosyl-L-methionine</name>
        <dbReference type="ChEBI" id="CHEBI:59789"/>
    </ligand>
</feature>
<feature type="binding site" evidence="1">
    <location>
        <begin position="79"/>
        <end position="80"/>
    </location>
    <ligand>
        <name>S-adenosyl-L-methionine</name>
        <dbReference type="ChEBI" id="CHEBI:59789"/>
    </ligand>
</feature>
<feature type="binding site" evidence="1">
    <location>
        <position position="85"/>
    </location>
    <ligand>
        <name>S-adenosyl-L-methionine</name>
        <dbReference type="ChEBI" id="CHEBI:59789"/>
    </ligand>
</feature>
<feature type="binding site" evidence="1">
    <location>
        <position position="103"/>
    </location>
    <ligand>
        <name>S-adenosyl-L-methionine</name>
        <dbReference type="ChEBI" id="CHEBI:59789"/>
    </ligand>
</feature>
<feature type="binding site" evidence="1">
    <location>
        <position position="132"/>
    </location>
    <ligand>
        <name>S-adenosyl-L-methionine</name>
        <dbReference type="ChEBI" id="CHEBI:59789"/>
    </ligand>
</feature>
<feature type="binding site" evidence="1">
    <location>
        <position position="155"/>
    </location>
    <ligand>
        <name>a divalent metal cation</name>
        <dbReference type="ChEBI" id="CHEBI:60240"/>
    </ligand>
</feature>
<feature type="binding site" evidence="1">
    <location>
        <position position="157"/>
    </location>
    <ligand>
        <name>S-adenosyl-L-methionine</name>
        <dbReference type="ChEBI" id="CHEBI:59789"/>
    </ligand>
</feature>
<feature type="binding site" evidence="1">
    <location>
        <position position="181"/>
    </location>
    <ligand>
        <name>a divalent metal cation</name>
        <dbReference type="ChEBI" id="CHEBI:60240"/>
    </ligand>
</feature>
<feature type="binding site" evidence="1">
    <location>
        <position position="182"/>
    </location>
    <ligand>
        <name>a divalent metal cation</name>
        <dbReference type="ChEBI" id="CHEBI:60240"/>
    </ligand>
</feature>
<feature type="strand" evidence="6">
    <location>
        <begin position="1"/>
        <end position="3"/>
    </location>
</feature>
<feature type="strand" evidence="6">
    <location>
        <begin position="7"/>
        <end position="10"/>
    </location>
</feature>
<feature type="strand" evidence="6">
    <location>
        <begin position="15"/>
        <end position="17"/>
    </location>
</feature>
<feature type="helix" evidence="6">
    <location>
        <begin position="19"/>
        <end position="29"/>
    </location>
</feature>
<feature type="helix" evidence="6">
    <location>
        <begin position="31"/>
        <end position="33"/>
    </location>
</feature>
<feature type="helix" evidence="6">
    <location>
        <begin position="36"/>
        <end position="46"/>
    </location>
</feature>
<feature type="helix" evidence="6">
    <location>
        <begin position="51"/>
        <end position="53"/>
    </location>
</feature>
<feature type="helix" evidence="6">
    <location>
        <begin position="57"/>
        <end position="69"/>
    </location>
</feature>
<feature type="strand" evidence="6">
    <location>
        <begin position="74"/>
        <end position="78"/>
    </location>
</feature>
<feature type="helix" evidence="6">
    <location>
        <begin position="84"/>
        <end position="92"/>
    </location>
</feature>
<feature type="strand" evidence="6">
    <location>
        <begin position="98"/>
        <end position="104"/>
    </location>
</feature>
<feature type="helix" evidence="6">
    <location>
        <begin position="106"/>
        <end position="118"/>
    </location>
</feature>
<feature type="helix" evidence="6">
    <location>
        <begin position="122"/>
        <end position="124"/>
    </location>
</feature>
<feature type="strand" evidence="6">
    <location>
        <begin position="125"/>
        <end position="130"/>
    </location>
</feature>
<feature type="helix" evidence="6">
    <location>
        <begin position="132"/>
        <end position="142"/>
    </location>
</feature>
<feature type="helix" evidence="6">
    <location>
        <begin position="145"/>
        <end position="147"/>
    </location>
</feature>
<feature type="strand" evidence="6">
    <location>
        <begin position="149"/>
        <end position="154"/>
    </location>
</feature>
<feature type="helix" evidence="6">
    <location>
        <begin position="158"/>
        <end position="160"/>
    </location>
</feature>
<feature type="helix" evidence="6">
    <location>
        <begin position="161"/>
        <end position="171"/>
    </location>
</feature>
<feature type="strand" evidence="6">
    <location>
        <begin position="172"/>
        <end position="181"/>
    </location>
</feature>
<feature type="turn" evidence="6">
    <location>
        <begin position="182"/>
        <end position="184"/>
    </location>
</feature>
<feature type="helix" evidence="6">
    <location>
        <begin position="185"/>
        <end position="190"/>
    </location>
</feature>
<feature type="helix" evidence="6">
    <location>
        <begin position="199"/>
        <end position="217"/>
    </location>
</feature>
<feature type="strand" evidence="6">
    <location>
        <begin position="221"/>
        <end position="226"/>
    </location>
</feature>
<feature type="strand" evidence="6">
    <location>
        <begin position="232"/>
        <end position="237"/>
    </location>
</feature>
<reference key="1">
    <citation type="journal article" date="2014" name="PLoS ONE">
        <title>Cloning and characterization of a norbelladine 4'-O-methyltransferase involved in the biosynthesis of the Alzheimer's drug galanthamine in Narcissus sp. aff. pseudonarcissus.</title>
        <authorList>
            <person name="Kilgore M.B."/>
            <person name="Augustin M.M."/>
            <person name="Starks C.M."/>
            <person name="O'Neil-Johnson M."/>
            <person name="May G.D."/>
            <person name="Crow J.A."/>
            <person name="Kutchan T.M."/>
        </authorList>
    </citation>
    <scope>NUCLEOTIDE SEQUENCE [MRNA]</scope>
    <scope>FUNCTION</scope>
    <scope>CATALYTIC ACTIVITY</scope>
    <scope>BIOPHYSICOCHEMICAL PROPERTIES</scope>
    <scope>COFACTOR</scope>
    <scope>TISSUE SPECIFICITY</scope>
    <scope>PATHWAY</scope>
    <source>
        <strain>cv. Carlton</strain>
        <tissue>Bulb</tissue>
    </source>
</reference>
<reference key="2">
    <citation type="journal article" date="1963" name="J. Biol. Chem.">
        <title>Alkaloids and plant metabolism. VI. O-methylation in vitro of norbelladine, a precursor of amaryllidaceae alkaloids.</title>
        <authorList>
            <person name="Mann J.D."/>
            <person name="Fales H.M."/>
            <person name="Mudd S.H."/>
        </authorList>
    </citation>
    <scope>CATALYTIC ACTIVITY</scope>
</reference>
<sequence>MGASIDDYSLVHKNILHSEDLLKYILETSAYPREHEQLKGLREVTEKHEWSSALVPADEGLFLSMLLKLMNAKRTIEIGVYTGYSLLTTALALPEDGKITAIDVNKSYYEIGLPFIQKAGVEHKINFIESEALPVLDQMLEEMKEEDLYDYAFVDADKSNYANYHERLVKLVRIGGAILYDNTLWYGSVAYPEYPGLHPEEEVARLSFRNLNTFLAADPRVEISQVSIGDGVTICRRLY</sequence>
<dbReference type="EC" id="2.1.1.336" evidence="2 3"/>
<dbReference type="EMBL" id="KJ584561">
    <property type="protein sequence ID" value="AIL54541.1"/>
    <property type="molecule type" value="mRNA"/>
</dbReference>
<dbReference type="PDB" id="8UKE">
    <property type="method" value="X-ray"/>
    <property type="resolution" value="2.40 A"/>
    <property type="chains" value="A/B/C/D/E/F=1-239"/>
</dbReference>
<dbReference type="PDB" id="8XE3">
    <property type="method" value="X-ray"/>
    <property type="resolution" value="1.72 A"/>
    <property type="chains" value="A/B=1-239"/>
</dbReference>
<dbReference type="PDB" id="8XE4">
    <property type="method" value="X-ray"/>
    <property type="resolution" value="1.96 A"/>
    <property type="chains" value="A/B/C/D=1-239"/>
</dbReference>
<dbReference type="PDB" id="8XE5">
    <property type="method" value="X-ray"/>
    <property type="resolution" value="2.07 A"/>
    <property type="chains" value="A/B/C/D=1-239"/>
</dbReference>
<dbReference type="PDB" id="8Z8O">
    <property type="method" value="X-ray"/>
    <property type="resolution" value="1.71 A"/>
    <property type="chains" value="A/B/C/D=1-239"/>
</dbReference>
<dbReference type="PDB" id="8Z8P">
    <property type="method" value="X-ray"/>
    <property type="resolution" value="1.68 A"/>
    <property type="chains" value="A/B/C/D=1-239"/>
</dbReference>
<dbReference type="PDB" id="8Z8R">
    <property type="method" value="X-ray"/>
    <property type="resolution" value="1.79 A"/>
    <property type="chains" value="A/B/C/D=1-239"/>
</dbReference>
<dbReference type="PDB" id="8Z8S">
    <property type="method" value="X-ray"/>
    <property type="resolution" value="1.94 A"/>
    <property type="chains" value="A/B=1-239"/>
</dbReference>
<dbReference type="PDB" id="8ZFW">
    <property type="method" value="X-ray"/>
    <property type="resolution" value="2.18 A"/>
    <property type="chains" value="A/B=1-239"/>
</dbReference>
<dbReference type="PDBsum" id="8UKE"/>
<dbReference type="PDBsum" id="8XE3"/>
<dbReference type="PDBsum" id="8XE4"/>
<dbReference type="PDBsum" id="8XE5"/>
<dbReference type="PDBsum" id="8Z8O"/>
<dbReference type="PDBsum" id="8Z8P"/>
<dbReference type="PDBsum" id="8Z8R"/>
<dbReference type="PDBsum" id="8Z8S"/>
<dbReference type="PDBsum" id="8ZFW"/>
<dbReference type="SMR" id="A0A077EWA5"/>
<dbReference type="KEGG" id="ag:AIL54541"/>
<dbReference type="BioCyc" id="MetaCyc:MONOMER-20064"/>
<dbReference type="BRENDA" id="2.1.1.336">
    <property type="organism ID" value="14577"/>
</dbReference>
<dbReference type="GO" id="GO:0046872">
    <property type="term" value="F:metal ion binding"/>
    <property type="evidence" value="ECO:0007669"/>
    <property type="project" value="UniProtKB-KW"/>
</dbReference>
<dbReference type="GO" id="GO:0008171">
    <property type="term" value="F:O-methyltransferase activity"/>
    <property type="evidence" value="ECO:0007669"/>
    <property type="project" value="InterPro"/>
</dbReference>
<dbReference type="GO" id="GO:0008757">
    <property type="term" value="F:S-adenosylmethionine-dependent methyltransferase activity"/>
    <property type="evidence" value="ECO:0007669"/>
    <property type="project" value="TreeGrafter"/>
</dbReference>
<dbReference type="GO" id="GO:0009820">
    <property type="term" value="P:alkaloid metabolic process"/>
    <property type="evidence" value="ECO:0007669"/>
    <property type="project" value="UniProtKB-KW"/>
</dbReference>
<dbReference type="GO" id="GO:0032259">
    <property type="term" value="P:methylation"/>
    <property type="evidence" value="ECO:0007669"/>
    <property type="project" value="UniProtKB-KW"/>
</dbReference>
<dbReference type="Gene3D" id="3.40.50.150">
    <property type="entry name" value="Vaccinia Virus protein VP39"/>
    <property type="match status" value="1"/>
</dbReference>
<dbReference type="InterPro" id="IPR050362">
    <property type="entry name" value="Cation-dep_OMT"/>
</dbReference>
<dbReference type="InterPro" id="IPR029063">
    <property type="entry name" value="SAM-dependent_MTases_sf"/>
</dbReference>
<dbReference type="InterPro" id="IPR002935">
    <property type="entry name" value="SAM_O-MeTrfase"/>
</dbReference>
<dbReference type="PANTHER" id="PTHR10509">
    <property type="entry name" value="O-METHYLTRANSFERASE-RELATED"/>
    <property type="match status" value="1"/>
</dbReference>
<dbReference type="PANTHER" id="PTHR10509:SF34">
    <property type="entry name" value="TAPETUM-SPECIFIC METHYLTRANSFERASE 1"/>
    <property type="match status" value="1"/>
</dbReference>
<dbReference type="Pfam" id="PF01596">
    <property type="entry name" value="Methyltransf_3"/>
    <property type="match status" value="1"/>
</dbReference>
<dbReference type="SUPFAM" id="SSF53335">
    <property type="entry name" value="S-adenosyl-L-methionine-dependent methyltransferases"/>
    <property type="match status" value="1"/>
</dbReference>
<dbReference type="PROSITE" id="PS51682">
    <property type="entry name" value="SAM_OMT_I"/>
    <property type="match status" value="1"/>
</dbReference>
<evidence type="ECO:0000255" key="1">
    <source>
        <dbReference type="PROSITE-ProRule" id="PRU01019"/>
    </source>
</evidence>
<evidence type="ECO:0000269" key="2">
    <source>
    </source>
</evidence>
<evidence type="ECO:0000269" key="3">
    <source>
    </source>
</evidence>
<evidence type="ECO:0000303" key="4">
    <source>
    </source>
</evidence>
<evidence type="ECO:0000305" key="5"/>
<evidence type="ECO:0007829" key="6">
    <source>
        <dbReference type="PDB" id="8Z8P"/>
    </source>
</evidence>
<organism>
    <name type="scientific">Narcissus aff. pseudonarcissus MK-2014</name>
    <name type="common">Daffodil</name>
    <dbReference type="NCBI Taxonomy" id="1540222"/>
    <lineage>
        <taxon>Eukaryota</taxon>
        <taxon>Viridiplantae</taxon>
        <taxon>Streptophyta</taxon>
        <taxon>Embryophyta</taxon>
        <taxon>Tracheophyta</taxon>
        <taxon>Spermatophyta</taxon>
        <taxon>Magnoliopsida</taxon>
        <taxon>Liliopsida</taxon>
        <taxon>Asparagales</taxon>
        <taxon>Amaryllidaceae</taxon>
        <taxon>Amaryllidoideae</taxon>
        <taxon>Narcissus</taxon>
    </lineage>
</organism>
<protein>
    <recommendedName>
        <fullName evidence="4">Norbelladine 4'-O-methyltransferase</fullName>
        <shortName evidence="4">NpN4OMT</shortName>
        <ecNumber evidence="2 3">2.1.1.336</ecNumber>
    </recommendedName>
</protein>
<accession>A0A077EWA5</accession>
<comment type="function">
    <text evidence="3">4'-O-methyltransferase converting norbelladine to 4'-O-methylnorbelladine. 4'-O-methylnorbelladine is a precursor to all Amaryllidaceae alkaloids such as galanthamine, lycorine and haemanthamine, and including haemanthamine- and crinamine-type alkaloids, promising anticancer agents. Can use norbelladine, N-methylnorbelladine and dopamine as substrate, but not caffeic acid, vanillin, 3,4-dihydroxybenzaldehyde and tyramine.</text>
</comment>
<comment type="catalytic activity">
    <reaction evidence="2 3">
        <text>norbelladine + S-adenosyl-L-methionine = 4'-O-methylnorbelladine + S-adenosyl-L-homocysteine + H(+)</text>
        <dbReference type="Rhea" id="RHEA:51268"/>
        <dbReference type="ChEBI" id="CHEBI:15378"/>
        <dbReference type="ChEBI" id="CHEBI:57856"/>
        <dbReference type="ChEBI" id="CHEBI:59789"/>
        <dbReference type="ChEBI" id="CHEBI:133993"/>
        <dbReference type="ChEBI" id="CHEBI:134001"/>
        <dbReference type="EC" id="2.1.1.336"/>
    </reaction>
</comment>
<comment type="cofactor">
    <cofactor evidence="3">
        <name>Mg(2+)</name>
        <dbReference type="ChEBI" id="CHEBI:18420"/>
    </cofactor>
</comment>
<comment type="biophysicochemical properties">
    <kinetics>
        <KM evidence="3">1.6 uM for norbelladine</KM>
        <KM evidence="3">28.5 uM for S-adenosyl-L-methionine</KM>
        <KM evidence="3">1.9 uM for N-methylnorbelladine</KM>
        <KM evidence="3">7.3 uM for dopamine</KM>
        <text evidence="3">kcat is 1.3 min(-1) with norbelladine as substrate. kcat is 2.6 min(-1) with N-methylnorbelladine as substrate. kcat is 4.5 min(-1) with S-adenosyl-L-methionine as substrate. kcat is 3.6 min(-1) with dopamine as substrate.</text>
    </kinetics>
    <phDependence>
        <text evidence="3">Optimum pH is 8.8.</text>
    </phDependence>
    <temperatureDependence>
        <text evidence="3">Optimum temperature is 45 degrees Celsius.</text>
    </temperatureDependence>
</comment>
<comment type="pathway">
    <text evidence="3">Alkaloid biosynthesis.</text>
</comment>
<comment type="tissue specificity">
    <text evidence="3">Highly expressed in bulbs. Detected in leaves and inflorescences.</text>
</comment>
<comment type="similarity">
    <text evidence="5">Belongs to the class I-like SAM-binding methyltransferase superfamily. Cation-dependent O-methyltransferase family.</text>
</comment>
<proteinExistence type="evidence at protein level"/>
<name>NOMT_NARAP</name>
<keyword id="KW-0002">3D-structure</keyword>
<keyword id="KW-0017">Alkaloid metabolism</keyword>
<keyword id="KW-0479">Metal-binding</keyword>
<keyword id="KW-0489">Methyltransferase</keyword>
<keyword id="KW-0949">S-adenosyl-L-methionine</keyword>
<keyword id="KW-0808">Transferase</keyword>
<gene>
    <name evidence="4" type="primary">N4OMT</name>
</gene>